<evidence type="ECO:0000255" key="1"/>
<evidence type="ECO:0000256" key="2">
    <source>
        <dbReference type="SAM" id="MobiDB-lite"/>
    </source>
</evidence>
<evidence type="ECO:0000269" key="3">
    <source>
    </source>
</evidence>
<evidence type="ECO:0000305" key="4"/>
<name>BRK1C_BOMMX</name>
<protein>
    <recommendedName>
        <fullName>Kininogen-1c</fullName>
    </recommendedName>
    <alternativeName>
        <fullName>BMK-1</fullName>
    </alternativeName>
    <component>
        <recommendedName>
            <fullName>Maximakinin</fullName>
        </recommendedName>
        <alternativeName>
            <fullName>Bombinakinin M</fullName>
        </alternativeName>
    </component>
    <component>
        <recommendedName>
            <fullName>Bradykinin</fullName>
        </recommendedName>
    </component>
</protein>
<proteinExistence type="evidence at protein level"/>
<comment type="function">
    <text>Potent vasodilator. Binds B1 (BDKRB1) and B2 (BDKRB2) bradykinin receptors.</text>
</comment>
<comment type="subcellular location">
    <subcellularLocation>
        <location>Secreted</location>
    </subcellularLocation>
</comment>
<comment type="tissue specificity">
    <text>Expressed by the skin glands.</text>
</comment>
<comment type="similarity">
    <text evidence="4">Belongs to the bradykinin-related peptide family.</text>
</comment>
<accession>Q90W88</accession>
<dbReference type="EMBL" id="AJ315488">
    <property type="protein sequence ID" value="CAC48026.2"/>
    <property type="molecule type" value="mRNA"/>
</dbReference>
<dbReference type="GO" id="GO:0005576">
    <property type="term" value="C:extracellular region"/>
    <property type="evidence" value="ECO:0007669"/>
    <property type="project" value="UniProtKB-SubCell"/>
</dbReference>
<dbReference type="GO" id="GO:0005179">
    <property type="term" value="F:hormone activity"/>
    <property type="evidence" value="ECO:0007669"/>
    <property type="project" value="InterPro"/>
</dbReference>
<dbReference type="GO" id="GO:0090729">
    <property type="term" value="F:toxin activity"/>
    <property type="evidence" value="ECO:0007669"/>
    <property type="project" value="UniProtKB-KW"/>
</dbReference>
<dbReference type="GO" id="GO:0006952">
    <property type="term" value="P:defense response"/>
    <property type="evidence" value="ECO:0007669"/>
    <property type="project" value="UniProtKB-KW"/>
</dbReference>
<dbReference type="GO" id="GO:0042311">
    <property type="term" value="P:vasodilation"/>
    <property type="evidence" value="ECO:0007669"/>
    <property type="project" value="UniProtKB-KW"/>
</dbReference>
<dbReference type="InterPro" id="IPR009608">
    <property type="entry name" value="Bradykinin"/>
</dbReference>
<dbReference type="Pfam" id="PF06753">
    <property type="entry name" value="Bradykinin"/>
    <property type="match status" value="4"/>
</dbReference>
<feature type="signal peptide" evidence="1">
    <location>
        <begin position="1"/>
        <end position="23"/>
    </location>
</feature>
<feature type="chain" id="PRO_0000003416" description="Kininogen-1c">
    <location>
        <begin position="24"/>
        <end position="152"/>
    </location>
</feature>
<feature type="peptide" id="PRO_0000003417" description="Maximakinin" evidence="3">
    <location>
        <begin position="41"/>
        <end position="59"/>
    </location>
</feature>
<feature type="peptide" id="PRO_0000003418" description="Bradykinin" evidence="3">
    <location>
        <begin position="51"/>
        <end position="59"/>
    </location>
</feature>
<feature type="peptide" id="PRO_0000003419" description="Maximakinin" evidence="3">
    <location>
        <begin position="69"/>
        <end position="87"/>
    </location>
</feature>
<feature type="peptide" id="PRO_0000003420" description="Bradykinin" evidence="3">
    <location>
        <begin position="79"/>
        <end position="87"/>
    </location>
</feature>
<feature type="peptide" id="PRO_0000003421" description="Maximakinin" evidence="3">
    <location>
        <begin position="97"/>
        <end position="115"/>
    </location>
</feature>
<feature type="peptide" id="PRO_0000003422" description="Bradykinin" evidence="3">
    <location>
        <begin position="107"/>
        <end position="115"/>
    </location>
</feature>
<feature type="peptide" id="PRO_0000003423" description="Maximakinin" evidence="3">
    <location>
        <begin position="125"/>
        <end position="143"/>
    </location>
</feature>
<feature type="peptide" id="PRO_0000003424" description="Bradykinin" evidence="3">
    <location>
        <begin position="135"/>
        <end position="143"/>
    </location>
</feature>
<feature type="region of interest" description="Disordered" evidence="2">
    <location>
        <begin position="28"/>
        <end position="152"/>
    </location>
</feature>
<feature type="compositionally biased region" description="Basic and acidic residues" evidence="2">
    <location>
        <begin position="28"/>
        <end position="44"/>
    </location>
</feature>
<keyword id="KW-0878">Amphibian defense peptide</keyword>
<keyword id="KW-1222">Bradykinin receptor impairing toxin</keyword>
<keyword id="KW-0903">Direct protein sequencing</keyword>
<keyword id="KW-1213">G-protein coupled receptor impairing toxin</keyword>
<keyword id="KW-0677">Repeat</keyword>
<keyword id="KW-0964">Secreted</keyword>
<keyword id="KW-0732">Signal</keyword>
<keyword id="KW-0800">Toxin</keyword>
<keyword id="KW-0838">Vasoactive</keyword>
<keyword id="KW-0840">Vasodilator</keyword>
<reference key="1">
    <citation type="journal article" date="2003" name="Peptides">
        <title>Cloning of maximakinin precursor cDNAs from Chinese toad, Bombina maxima, venom.</title>
        <authorList>
            <person name="Chen T."/>
            <person name="Bjourson A.J."/>
            <person name="McClean S."/>
            <person name="Orr D.F."/>
            <person name="O'Kane E.J."/>
            <person name="Rao P."/>
            <person name="Shaw C."/>
        </authorList>
    </citation>
    <scope>NUCLEOTIDE SEQUENCE [MRNA]</scope>
    <scope>PROTEIN SEQUENCE OF MAXIMAKININ</scope>
    <scope>SYNTHESIS OF MAXIMAKININ</scope>
    <source>
        <tissue>Skin secretion</tissue>
    </source>
</reference>
<organism>
    <name type="scientific">Bombina maxima</name>
    <name type="common">Giant fire-bellied toad</name>
    <name type="synonym">Chinese red belly toad</name>
    <dbReference type="NCBI Taxonomy" id="161274"/>
    <lineage>
        <taxon>Eukaryota</taxon>
        <taxon>Metazoa</taxon>
        <taxon>Chordata</taxon>
        <taxon>Craniata</taxon>
        <taxon>Vertebrata</taxon>
        <taxon>Euteleostomi</taxon>
        <taxon>Amphibia</taxon>
        <taxon>Batrachia</taxon>
        <taxon>Anura</taxon>
        <taxon>Bombinatoridae</taxon>
        <taxon>Bombina</taxon>
    </lineage>
</organism>
<sequence length="152" mass="17604">MRLWFCLSLFIVLCLEHFPGTLADERNVPESEEKTEQFLRDLPKINRKGPRPPGFSPFRGKFHSQTLRDLPKINRKGPRPPGFSPFRGKFHSQTLRDLPKINRKGPRPPGFSPFRGKFHSQSLRDLPKINRKGPRPPGFSPFRGKFHSQSHV</sequence>